<evidence type="ECO:0000255" key="1">
    <source>
        <dbReference type="HAMAP-Rule" id="MF_00385"/>
    </source>
</evidence>
<evidence type="ECO:0000305" key="2"/>
<keyword id="KW-0687">Ribonucleoprotein</keyword>
<keyword id="KW-0689">Ribosomal protein</keyword>
<sequence>MVKVRLARFGRKKRPFYRIVVTDSRKRRDSGWIESIGYYNPMTEPATVKMDLDRLNYWLGVGAQMSERVTKLKKIAEENNA</sequence>
<accession>B9L6B5</accession>
<comment type="similarity">
    <text evidence="1">Belongs to the bacterial ribosomal protein bS16 family.</text>
</comment>
<proteinExistence type="inferred from homology"/>
<dbReference type="EMBL" id="CP001279">
    <property type="protein sequence ID" value="ACM92400.1"/>
    <property type="molecule type" value="Genomic_DNA"/>
</dbReference>
<dbReference type="RefSeq" id="WP_012663771.1">
    <property type="nucleotide sequence ID" value="NC_012115.1"/>
</dbReference>
<dbReference type="SMR" id="B9L6B5"/>
<dbReference type="STRING" id="598659.NAMH_1513"/>
<dbReference type="KEGG" id="nam:NAMH_1513"/>
<dbReference type="eggNOG" id="COG0228">
    <property type="taxonomic scope" value="Bacteria"/>
</dbReference>
<dbReference type="HOGENOM" id="CLU_100590_5_1_7"/>
<dbReference type="OrthoDB" id="9807878at2"/>
<dbReference type="Proteomes" id="UP000000448">
    <property type="component" value="Chromosome"/>
</dbReference>
<dbReference type="GO" id="GO:0005737">
    <property type="term" value="C:cytoplasm"/>
    <property type="evidence" value="ECO:0007669"/>
    <property type="project" value="UniProtKB-ARBA"/>
</dbReference>
<dbReference type="GO" id="GO:0015935">
    <property type="term" value="C:small ribosomal subunit"/>
    <property type="evidence" value="ECO:0007669"/>
    <property type="project" value="TreeGrafter"/>
</dbReference>
<dbReference type="GO" id="GO:0003735">
    <property type="term" value="F:structural constituent of ribosome"/>
    <property type="evidence" value="ECO:0007669"/>
    <property type="project" value="InterPro"/>
</dbReference>
<dbReference type="GO" id="GO:0006412">
    <property type="term" value="P:translation"/>
    <property type="evidence" value="ECO:0007669"/>
    <property type="project" value="UniProtKB-UniRule"/>
</dbReference>
<dbReference type="FunFam" id="3.30.1320.10:FF:000005">
    <property type="entry name" value="30S ribosomal protein S16"/>
    <property type="match status" value="1"/>
</dbReference>
<dbReference type="Gene3D" id="3.30.1320.10">
    <property type="match status" value="1"/>
</dbReference>
<dbReference type="HAMAP" id="MF_00385">
    <property type="entry name" value="Ribosomal_bS16"/>
    <property type="match status" value="1"/>
</dbReference>
<dbReference type="InterPro" id="IPR000307">
    <property type="entry name" value="Ribosomal_bS16"/>
</dbReference>
<dbReference type="InterPro" id="IPR020592">
    <property type="entry name" value="Ribosomal_bS16_CS"/>
</dbReference>
<dbReference type="InterPro" id="IPR023803">
    <property type="entry name" value="Ribosomal_bS16_dom_sf"/>
</dbReference>
<dbReference type="NCBIfam" id="TIGR00002">
    <property type="entry name" value="S16"/>
    <property type="match status" value="1"/>
</dbReference>
<dbReference type="PANTHER" id="PTHR12919">
    <property type="entry name" value="30S RIBOSOMAL PROTEIN S16"/>
    <property type="match status" value="1"/>
</dbReference>
<dbReference type="PANTHER" id="PTHR12919:SF20">
    <property type="entry name" value="SMALL RIBOSOMAL SUBUNIT PROTEIN BS16M"/>
    <property type="match status" value="1"/>
</dbReference>
<dbReference type="Pfam" id="PF00886">
    <property type="entry name" value="Ribosomal_S16"/>
    <property type="match status" value="1"/>
</dbReference>
<dbReference type="SUPFAM" id="SSF54565">
    <property type="entry name" value="Ribosomal protein S16"/>
    <property type="match status" value="1"/>
</dbReference>
<dbReference type="PROSITE" id="PS00732">
    <property type="entry name" value="RIBOSOMAL_S16"/>
    <property type="match status" value="1"/>
</dbReference>
<organism>
    <name type="scientific">Nautilia profundicola (strain ATCC BAA-1463 / DSM 18972 / AmH)</name>
    <dbReference type="NCBI Taxonomy" id="598659"/>
    <lineage>
        <taxon>Bacteria</taxon>
        <taxon>Pseudomonadati</taxon>
        <taxon>Campylobacterota</taxon>
        <taxon>Epsilonproteobacteria</taxon>
        <taxon>Nautiliales</taxon>
        <taxon>Nautiliaceae</taxon>
        <taxon>Nautilia</taxon>
    </lineage>
</organism>
<feature type="chain" id="PRO_1000134317" description="Small ribosomal subunit protein bS16">
    <location>
        <begin position="1"/>
        <end position="81"/>
    </location>
</feature>
<reference key="1">
    <citation type="journal article" date="2009" name="PLoS Genet.">
        <title>Adaptations to submarine hydrothermal environments exemplified by the genome of Nautilia profundicola.</title>
        <authorList>
            <person name="Campbell B.J."/>
            <person name="Smith J.L."/>
            <person name="Hanson T.E."/>
            <person name="Klotz M.G."/>
            <person name="Stein L.Y."/>
            <person name="Lee C.K."/>
            <person name="Wu D."/>
            <person name="Robinson J.M."/>
            <person name="Khouri H.M."/>
            <person name="Eisen J.A."/>
            <person name="Cary S.C."/>
        </authorList>
    </citation>
    <scope>NUCLEOTIDE SEQUENCE [LARGE SCALE GENOMIC DNA]</scope>
    <source>
        <strain>ATCC BAA-1463 / DSM 18972 / AmH</strain>
    </source>
</reference>
<gene>
    <name evidence="1" type="primary">rpsP</name>
    <name type="ordered locus">NAMH_1513</name>
</gene>
<protein>
    <recommendedName>
        <fullName evidence="1">Small ribosomal subunit protein bS16</fullName>
    </recommendedName>
    <alternativeName>
        <fullName evidence="2">30S ribosomal protein S16</fullName>
    </alternativeName>
</protein>
<name>RS16_NAUPA</name>